<dbReference type="EMBL" id="CP000284">
    <property type="protein sequence ID" value="ABE48461.1"/>
    <property type="molecule type" value="Genomic_DNA"/>
</dbReference>
<dbReference type="RefSeq" id="WP_011478558.1">
    <property type="nucleotide sequence ID" value="NC_007947.1"/>
</dbReference>
<dbReference type="SMR" id="Q1H4X6"/>
<dbReference type="STRING" id="265072.Mfla_0190"/>
<dbReference type="KEGG" id="mfa:Mfla_0190"/>
<dbReference type="eggNOG" id="COG2922">
    <property type="taxonomic scope" value="Bacteria"/>
</dbReference>
<dbReference type="HOGENOM" id="CLU_133242_0_0_4"/>
<dbReference type="OrthoDB" id="5297467at2"/>
<dbReference type="Proteomes" id="UP000002440">
    <property type="component" value="Chromosome"/>
</dbReference>
<dbReference type="HAMAP" id="MF_00598">
    <property type="entry name" value="Smg"/>
    <property type="match status" value="1"/>
</dbReference>
<dbReference type="InterPro" id="IPR007456">
    <property type="entry name" value="Smg"/>
</dbReference>
<dbReference type="PANTHER" id="PTHR38692">
    <property type="entry name" value="PROTEIN SMG"/>
    <property type="match status" value="1"/>
</dbReference>
<dbReference type="PANTHER" id="PTHR38692:SF1">
    <property type="entry name" value="PROTEIN SMG"/>
    <property type="match status" value="1"/>
</dbReference>
<dbReference type="Pfam" id="PF04361">
    <property type="entry name" value="DUF494"/>
    <property type="match status" value="1"/>
</dbReference>
<comment type="similarity">
    <text evidence="1">Belongs to the Smg family.</text>
</comment>
<keyword id="KW-1185">Reference proteome</keyword>
<evidence type="ECO:0000255" key="1">
    <source>
        <dbReference type="HAMAP-Rule" id="MF_00598"/>
    </source>
</evidence>
<reference key="1">
    <citation type="submission" date="2006-03" db="EMBL/GenBank/DDBJ databases">
        <title>Complete sequence of Methylobacillus flagellatus KT.</title>
        <authorList>
            <consortium name="US DOE Joint Genome Institute"/>
            <person name="Copeland A."/>
            <person name="Lucas S."/>
            <person name="Lapidus A."/>
            <person name="Barry K."/>
            <person name="Detter J.C."/>
            <person name="Glavina del Rio T."/>
            <person name="Hammon N."/>
            <person name="Israni S."/>
            <person name="Dalin E."/>
            <person name="Tice H."/>
            <person name="Pitluck S."/>
            <person name="Brettin T."/>
            <person name="Bruce D."/>
            <person name="Han C."/>
            <person name="Tapia R."/>
            <person name="Saunders E."/>
            <person name="Gilna P."/>
            <person name="Schmutz J."/>
            <person name="Larimer F."/>
            <person name="Land M."/>
            <person name="Kyrpides N."/>
            <person name="Anderson I."/>
            <person name="Richardson P."/>
        </authorList>
    </citation>
    <scope>NUCLEOTIDE SEQUENCE [LARGE SCALE GENOMIC DNA]</scope>
    <source>
        <strain>ATCC 51484 / DSM 6875 / VKM B-1610 / KT</strain>
    </source>
</reference>
<proteinExistence type="inferred from homology"/>
<protein>
    <recommendedName>
        <fullName evidence="1">Protein Smg homolog</fullName>
    </recommendedName>
</protein>
<feature type="chain" id="PRO_1000025654" description="Protein Smg homolog">
    <location>
        <begin position="1"/>
        <end position="150"/>
    </location>
</feature>
<organism>
    <name type="scientific">Methylobacillus flagellatus (strain ATCC 51484 / DSM 6875 / VKM B-1610 / KT)</name>
    <dbReference type="NCBI Taxonomy" id="265072"/>
    <lineage>
        <taxon>Bacteria</taxon>
        <taxon>Pseudomonadati</taxon>
        <taxon>Pseudomonadota</taxon>
        <taxon>Betaproteobacteria</taxon>
        <taxon>Nitrosomonadales</taxon>
        <taxon>Methylophilaceae</taxon>
        <taxon>Methylobacillus</taxon>
    </lineage>
</organism>
<accession>Q1H4X6</accession>
<name>SMG_METFK</name>
<sequence>MFEVLVYMFENYFESDIHPDHETLSKELFAAGFDQEDINGAFDWYSALESMSEESDAQLGTAGIRIYSEAETKRLSADSLSFMMFLEQAKVLTPAQRELVIDRAMALSQPEVGLEETRWIVLMALWNQDKANDYLFVEDAMFNDNRPTLH</sequence>
<gene>
    <name evidence="1" type="primary">smg</name>
    <name type="ordered locus">Mfla_0190</name>
</gene>